<name>AROA_SHEB8</name>
<feature type="chain" id="PRO_1000012469" description="3-phosphoshikimate 1-carboxyvinyltransferase">
    <location>
        <begin position="1"/>
        <end position="426"/>
    </location>
</feature>
<feature type="active site" description="Proton acceptor" evidence="1">
    <location>
        <position position="314"/>
    </location>
</feature>
<feature type="binding site" evidence="1">
    <location>
        <position position="22"/>
    </location>
    <ligand>
        <name>3-phosphoshikimate</name>
        <dbReference type="ChEBI" id="CHEBI:145989"/>
    </ligand>
</feature>
<feature type="binding site" evidence="1">
    <location>
        <position position="22"/>
    </location>
    <ligand>
        <name>phosphoenolpyruvate</name>
        <dbReference type="ChEBI" id="CHEBI:58702"/>
    </ligand>
</feature>
<feature type="binding site" evidence="1">
    <location>
        <position position="23"/>
    </location>
    <ligand>
        <name>3-phosphoshikimate</name>
        <dbReference type="ChEBI" id="CHEBI:145989"/>
    </ligand>
</feature>
<feature type="binding site" evidence="1">
    <location>
        <position position="27"/>
    </location>
    <ligand>
        <name>3-phosphoshikimate</name>
        <dbReference type="ChEBI" id="CHEBI:145989"/>
    </ligand>
</feature>
<feature type="binding site" evidence="1">
    <location>
        <position position="96"/>
    </location>
    <ligand>
        <name>phosphoenolpyruvate</name>
        <dbReference type="ChEBI" id="CHEBI:58702"/>
    </ligand>
</feature>
<feature type="binding site" evidence="1">
    <location>
        <position position="124"/>
    </location>
    <ligand>
        <name>phosphoenolpyruvate</name>
        <dbReference type="ChEBI" id="CHEBI:58702"/>
    </ligand>
</feature>
<feature type="binding site" evidence="1">
    <location>
        <position position="170"/>
    </location>
    <ligand>
        <name>3-phosphoshikimate</name>
        <dbReference type="ChEBI" id="CHEBI:145989"/>
    </ligand>
</feature>
<feature type="binding site" evidence="1">
    <location>
        <position position="171"/>
    </location>
    <ligand>
        <name>3-phosphoshikimate</name>
        <dbReference type="ChEBI" id="CHEBI:145989"/>
    </ligand>
</feature>
<feature type="binding site" evidence="1">
    <location>
        <position position="172"/>
    </location>
    <ligand>
        <name>3-phosphoshikimate</name>
        <dbReference type="ChEBI" id="CHEBI:145989"/>
    </ligand>
</feature>
<feature type="binding site" evidence="1">
    <location>
        <position position="172"/>
    </location>
    <ligand>
        <name>phosphoenolpyruvate</name>
        <dbReference type="ChEBI" id="CHEBI:58702"/>
    </ligand>
</feature>
<feature type="binding site" evidence="1">
    <location>
        <position position="198"/>
    </location>
    <ligand>
        <name>3-phosphoshikimate</name>
        <dbReference type="ChEBI" id="CHEBI:145989"/>
    </ligand>
</feature>
<feature type="binding site" evidence="1">
    <location>
        <position position="314"/>
    </location>
    <ligand>
        <name>3-phosphoshikimate</name>
        <dbReference type="ChEBI" id="CHEBI:145989"/>
    </ligand>
</feature>
<feature type="binding site" evidence="1">
    <location>
        <position position="337"/>
    </location>
    <ligand>
        <name>3-phosphoshikimate</name>
        <dbReference type="ChEBI" id="CHEBI:145989"/>
    </ligand>
</feature>
<feature type="binding site" evidence="1">
    <location>
        <position position="341"/>
    </location>
    <ligand>
        <name>3-phosphoshikimate</name>
        <dbReference type="ChEBI" id="CHEBI:145989"/>
    </ligand>
</feature>
<feature type="binding site" evidence="1">
    <location>
        <position position="345"/>
    </location>
    <ligand>
        <name>phosphoenolpyruvate</name>
        <dbReference type="ChEBI" id="CHEBI:58702"/>
    </ligand>
</feature>
<feature type="binding site" evidence="1">
    <location>
        <position position="387"/>
    </location>
    <ligand>
        <name>phosphoenolpyruvate</name>
        <dbReference type="ChEBI" id="CHEBI:58702"/>
    </ligand>
</feature>
<feature type="binding site" evidence="1">
    <location>
        <position position="412"/>
    </location>
    <ligand>
        <name>phosphoenolpyruvate</name>
        <dbReference type="ChEBI" id="CHEBI:58702"/>
    </ligand>
</feature>
<organism>
    <name type="scientific">Shewanella baltica (strain OS185)</name>
    <dbReference type="NCBI Taxonomy" id="402882"/>
    <lineage>
        <taxon>Bacteria</taxon>
        <taxon>Pseudomonadati</taxon>
        <taxon>Pseudomonadota</taxon>
        <taxon>Gammaproteobacteria</taxon>
        <taxon>Alteromonadales</taxon>
        <taxon>Shewanellaceae</taxon>
        <taxon>Shewanella</taxon>
    </lineage>
</organism>
<protein>
    <recommendedName>
        <fullName evidence="1">3-phosphoshikimate 1-carboxyvinyltransferase</fullName>
        <ecNumber evidence="1">2.5.1.19</ecNumber>
    </recommendedName>
    <alternativeName>
        <fullName evidence="1">5-enolpyruvylshikimate-3-phosphate synthase</fullName>
        <shortName evidence="1">EPSP synthase</shortName>
        <shortName evidence="1">EPSPS</shortName>
    </alternativeName>
</protein>
<keyword id="KW-0028">Amino-acid biosynthesis</keyword>
<keyword id="KW-0057">Aromatic amino acid biosynthesis</keyword>
<keyword id="KW-0963">Cytoplasm</keyword>
<keyword id="KW-0808">Transferase</keyword>
<dbReference type="EC" id="2.5.1.19" evidence="1"/>
<dbReference type="EMBL" id="CP000753">
    <property type="protein sequence ID" value="ABS08419.1"/>
    <property type="molecule type" value="Genomic_DNA"/>
</dbReference>
<dbReference type="RefSeq" id="WP_012089281.1">
    <property type="nucleotide sequence ID" value="NC_009665.1"/>
</dbReference>
<dbReference type="SMR" id="A6WNN0"/>
<dbReference type="KEGG" id="sbm:Shew185_2281"/>
<dbReference type="HOGENOM" id="CLU_024321_0_0_6"/>
<dbReference type="UniPathway" id="UPA00053">
    <property type="reaction ID" value="UER00089"/>
</dbReference>
<dbReference type="GO" id="GO:0005737">
    <property type="term" value="C:cytoplasm"/>
    <property type="evidence" value="ECO:0007669"/>
    <property type="project" value="UniProtKB-SubCell"/>
</dbReference>
<dbReference type="GO" id="GO:0003866">
    <property type="term" value="F:3-phosphoshikimate 1-carboxyvinyltransferase activity"/>
    <property type="evidence" value="ECO:0007669"/>
    <property type="project" value="UniProtKB-UniRule"/>
</dbReference>
<dbReference type="GO" id="GO:0008652">
    <property type="term" value="P:amino acid biosynthetic process"/>
    <property type="evidence" value="ECO:0007669"/>
    <property type="project" value="UniProtKB-KW"/>
</dbReference>
<dbReference type="GO" id="GO:0009073">
    <property type="term" value="P:aromatic amino acid family biosynthetic process"/>
    <property type="evidence" value="ECO:0007669"/>
    <property type="project" value="UniProtKB-KW"/>
</dbReference>
<dbReference type="GO" id="GO:0009423">
    <property type="term" value="P:chorismate biosynthetic process"/>
    <property type="evidence" value="ECO:0007669"/>
    <property type="project" value="UniProtKB-UniRule"/>
</dbReference>
<dbReference type="CDD" id="cd01556">
    <property type="entry name" value="EPSP_synthase"/>
    <property type="match status" value="1"/>
</dbReference>
<dbReference type="FunFam" id="3.65.10.10:FF:000003">
    <property type="entry name" value="3-phosphoshikimate 1-carboxyvinyltransferase"/>
    <property type="match status" value="1"/>
</dbReference>
<dbReference type="FunFam" id="3.65.10.10:FF:000004">
    <property type="entry name" value="3-phosphoshikimate 1-carboxyvinyltransferase"/>
    <property type="match status" value="1"/>
</dbReference>
<dbReference type="Gene3D" id="3.65.10.10">
    <property type="entry name" value="Enolpyruvate transferase domain"/>
    <property type="match status" value="2"/>
</dbReference>
<dbReference type="HAMAP" id="MF_00210">
    <property type="entry name" value="EPSP_synth"/>
    <property type="match status" value="1"/>
</dbReference>
<dbReference type="InterPro" id="IPR001986">
    <property type="entry name" value="Enolpyruvate_Tfrase_dom"/>
</dbReference>
<dbReference type="InterPro" id="IPR036968">
    <property type="entry name" value="Enolpyruvate_Tfrase_sf"/>
</dbReference>
<dbReference type="InterPro" id="IPR006264">
    <property type="entry name" value="EPSP_synthase"/>
</dbReference>
<dbReference type="InterPro" id="IPR023193">
    <property type="entry name" value="EPSP_synthase_CS"/>
</dbReference>
<dbReference type="InterPro" id="IPR013792">
    <property type="entry name" value="RNA3'P_cycl/enolpyr_Trfase_a/b"/>
</dbReference>
<dbReference type="NCBIfam" id="TIGR01356">
    <property type="entry name" value="aroA"/>
    <property type="match status" value="1"/>
</dbReference>
<dbReference type="PANTHER" id="PTHR21090">
    <property type="entry name" value="AROM/DEHYDROQUINATE SYNTHASE"/>
    <property type="match status" value="1"/>
</dbReference>
<dbReference type="PANTHER" id="PTHR21090:SF5">
    <property type="entry name" value="PENTAFUNCTIONAL AROM POLYPEPTIDE"/>
    <property type="match status" value="1"/>
</dbReference>
<dbReference type="Pfam" id="PF00275">
    <property type="entry name" value="EPSP_synthase"/>
    <property type="match status" value="1"/>
</dbReference>
<dbReference type="PIRSF" id="PIRSF000505">
    <property type="entry name" value="EPSPS"/>
    <property type="match status" value="1"/>
</dbReference>
<dbReference type="SUPFAM" id="SSF55205">
    <property type="entry name" value="EPT/RTPC-like"/>
    <property type="match status" value="1"/>
</dbReference>
<dbReference type="PROSITE" id="PS00104">
    <property type="entry name" value="EPSP_SYNTHASE_1"/>
    <property type="match status" value="1"/>
</dbReference>
<dbReference type="PROSITE" id="PS00885">
    <property type="entry name" value="EPSP_SYNTHASE_2"/>
    <property type="match status" value="1"/>
</dbReference>
<comment type="function">
    <text evidence="1">Catalyzes the transfer of the enolpyruvyl moiety of phosphoenolpyruvate (PEP) to the 5-hydroxyl of shikimate-3-phosphate (S3P) to produce enolpyruvyl shikimate-3-phosphate and inorganic phosphate.</text>
</comment>
<comment type="catalytic activity">
    <reaction evidence="1">
        <text>3-phosphoshikimate + phosphoenolpyruvate = 5-O-(1-carboxyvinyl)-3-phosphoshikimate + phosphate</text>
        <dbReference type="Rhea" id="RHEA:21256"/>
        <dbReference type="ChEBI" id="CHEBI:43474"/>
        <dbReference type="ChEBI" id="CHEBI:57701"/>
        <dbReference type="ChEBI" id="CHEBI:58702"/>
        <dbReference type="ChEBI" id="CHEBI:145989"/>
        <dbReference type="EC" id="2.5.1.19"/>
    </reaction>
    <physiologicalReaction direction="left-to-right" evidence="1">
        <dbReference type="Rhea" id="RHEA:21257"/>
    </physiologicalReaction>
</comment>
<comment type="pathway">
    <text evidence="1">Metabolic intermediate biosynthesis; chorismate biosynthesis; chorismate from D-erythrose 4-phosphate and phosphoenolpyruvate: step 6/7.</text>
</comment>
<comment type="subunit">
    <text evidence="1">Monomer.</text>
</comment>
<comment type="subcellular location">
    <subcellularLocation>
        <location evidence="1">Cytoplasm</location>
    </subcellularLocation>
</comment>
<comment type="similarity">
    <text evidence="1">Belongs to the EPSP synthase family.</text>
</comment>
<reference key="1">
    <citation type="submission" date="2007-07" db="EMBL/GenBank/DDBJ databases">
        <title>Complete sequence of chromosome of Shewanella baltica OS185.</title>
        <authorList>
            <consortium name="US DOE Joint Genome Institute"/>
            <person name="Copeland A."/>
            <person name="Lucas S."/>
            <person name="Lapidus A."/>
            <person name="Barry K."/>
            <person name="Glavina del Rio T."/>
            <person name="Dalin E."/>
            <person name="Tice H."/>
            <person name="Pitluck S."/>
            <person name="Sims D."/>
            <person name="Brettin T."/>
            <person name="Bruce D."/>
            <person name="Detter J.C."/>
            <person name="Han C."/>
            <person name="Schmutz J."/>
            <person name="Larimer F."/>
            <person name="Land M."/>
            <person name="Hauser L."/>
            <person name="Kyrpides N."/>
            <person name="Mikhailova N."/>
            <person name="Brettar I."/>
            <person name="Rodrigues J."/>
            <person name="Konstantinidis K."/>
            <person name="Tiedje J."/>
            <person name="Richardson P."/>
        </authorList>
    </citation>
    <scope>NUCLEOTIDE SEQUENCE [LARGE SCALE GENOMIC DNA]</scope>
    <source>
        <strain>OS185</strain>
    </source>
</reference>
<evidence type="ECO:0000255" key="1">
    <source>
        <dbReference type="HAMAP-Rule" id="MF_00210"/>
    </source>
</evidence>
<accession>A6WNN0</accession>
<gene>
    <name evidence="1" type="primary">aroA</name>
    <name type="ordered locus">Shew185_2281</name>
</gene>
<proteinExistence type="inferred from homology"/>
<sequence>MKQLRLEPVVQVRGEINIPGSKSISNRALLLATLAQGTTTLTNLLDSDDIRHMLASLKQLGVNYRLSQNNTECELDGLGGVISSESAQELFLGNAGTAMRPLCAALTLGQGEFTLTGEPRMEERPIGDLVDALRQLGANVVYLKNDGFPPLTINATGLSGGDVEIAGDLSSQFLTALLMVAPLAKGSVNIHVKGELVSKPYIDITLALMAQFGVTVINHDYARFEIVAGQQYVSPGKVLVEGDASSASYFLAAGAIKGGEVKVTGVGRLSIQGDVKFADVLEKMGADIEWGDDYIIARGSQLTAVDLDMNHIPDAAMTIATAALFAKGTTVIRNIYNWRIKETDRLAAMATELRKVGAEVEEGNDYIKITPPVVINTAEIDTYNDHRMAMCFSMLAFADCGITINDPDCTSKTFPDYFKQFASLQG</sequence>